<accession>A4SE63</accession>
<evidence type="ECO:0000255" key="1">
    <source>
        <dbReference type="HAMAP-Rule" id="MF_00083"/>
    </source>
</evidence>
<organism>
    <name type="scientific">Chlorobium phaeovibrioides (strain DSM 265 / 1930)</name>
    <name type="common">Prosthecochloris vibrioformis (strain DSM 265)</name>
    <dbReference type="NCBI Taxonomy" id="290318"/>
    <lineage>
        <taxon>Bacteria</taxon>
        <taxon>Pseudomonadati</taxon>
        <taxon>Chlorobiota</taxon>
        <taxon>Chlorobiia</taxon>
        <taxon>Chlorobiales</taxon>
        <taxon>Chlorobiaceae</taxon>
        <taxon>Chlorobium/Pelodictyon group</taxon>
        <taxon>Chlorobium</taxon>
    </lineage>
</organism>
<comment type="function">
    <text evidence="1">Hydrolyzes ribosome-free peptidyl-tRNAs (with 1 or more amino acids incorporated), which drop off the ribosome during protein synthesis, or as a result of ribosome stalling.</text>
</comment>
<comment type="function">
    <text evidence="1">Catalyzes the release of premature peptidyl moieties from peptidyl-tRNA molecules trapped in stalled 50S ribosomal subunits, and thus maintains levels of free tRNAs and 50S ribosomes.</text>
</comment>
<comment type="catalytic activity">
    <reaction evidence="1">
        <text>an N-acyl-L-alpha-aminoacyl-tRNA + H2O = an N-acyl-L-amino acid + a tRNA + H(+)</text>
        <dbReference type="Rhea" id="RHEA:54448"/>
        <dbReference type="Rhea" id="RHEA-COMP:10123"/>
        <dbReference type="Rhea" id="RHEA-COMP:13883"/>
        <dbReference type="ChEBI" id="CHEBI:15377"/>
        <dbReference type="ChEBI" id="CHEBI:15378"/>
        <dbReference type="ChEBI" id="CHEBI:59874"/>
        <dbReference type="ChEBI" id="CHEBI:78442"/>
        <dbReference type="ChEBI" id="CHEBI:138191"/>
        <dbReference type="EC" id="3.1.1.29"/>
    </reaction>
</comment>
<comment type="subunit">
    <text evidence="1">Monomer.</text>
</comment>
<comment type="subcellular location">
    <subcellularLocation>
        <location evidence="1">Cytoplasm</location>
    </subcellularLocation>
</comment>
<comment type="similarity">
    <text evidence="1">Belongs to the PTH family.</text>
</comment>
<protein>
    <recommendedName>
        <fullName evidence="1">Peptidyl-tRNA hydrolase</fullName>
        <shortName evidence="1">Pth</shortName>
        <ecNumber evidence="1">3.1.1.29</ecNumber>
    </recommendedName>
</protein>
<reference key="1">
    <citation type="submission" date="2007-03" db="EMBL/GenBank/DDBJ databases">
        <title>Complete sequence of Prosthecochloris vibrioformis DSM 265.</title>
        <authorList>
            <consortium name="US DOE Joint Genome Institute"/>
            <person name="Copeland A."/>
            <person name="Lucas S."/>
            <person name="Lapidus A."/>
            <person name="Barry K."/>
            <person name="Detter J.C."/>
            <person name="Glavina del Rio T."/>
            <person name="Hammon N."/>
            <person name="Israni S."/>
            <person name="Pitluck S."/>
            <person name="Schmutz J."/>
            <person name="Larimer F."/>
            <person name="Land M."/>
            <person name="Hauser L."/>
            <person name="Mikhailova N."/>
            <person name="Li T."/>
            <person name="Overmann J."/>
            <person name="Schuster S.C."/>
            <person name="Bryant D.A."/>
            <person name="Richardson P."/>
        </authorList>
    </citation>
    <scope>NUCLEOTIDE SEQUENCE [LARGE SCALE GENOMIC DNA]</scope>
    <source>
        <strain>DSM 265 / 1930</strain>
    </source>
</reference>
<gene>
    <name evidence="1" type="primary">pth</name>
    <name type="ordered locus">Cvib_0757</name>
</gene>
<sequence>MKLIIGLGNPEARYSNTRHNIGFEAVEALAAAFGAPFSKGKGKYLVAKIRHRGEQLMLVKPMTYMNLSGHAVVAAMNFHKALRSDILVICDDMNLPSGTLRLRSKGSAGGQNGLKHIIESLGSEEFARLRIGIGLEEKPQGGYSSFVLGKFSTDERNVMNRTLEVCTEAILDFAVNGISHAMNHYNKPVS</sequence>
<feature type="chain" id="PRO_1000075349" description="Peptidyl-tRNA hydrolase">
    <location>
        <begin position="1"/>
        <end position="190"/>
    </location>
</feature>
<feature type="active site" description="Proton acceptor" evidence="1">
    <location>
        <position position="19"/>
    </location>
</feature>
<feature type="binding site" evidence="1">
    <location>
        <position position="14"/>
    </location>
    <ligand>
        <name>tRNA</name>
        <dbReference type="ChEBI" id="CHEBI:17843"/>
    </ligand>
</feature>
<feature type="binding site" evidence="1">
    <location>
        <position position="64"/>
    </location>
    <ligand>
        <name>tRNA</name>
        <dbReference type="ChEBI" id="CHEBI:17843"/>
    </ligand>
</feature>
<feature type="binding site" evidence="1">
    <location>
        <position position="66"/>
    </location>
    <ligand>
        <name>tRNA</name>
        <dbReference type="ChEBI" id="CHEBI:17843"/>
    </ligand>
</feature>
<feature type="binding site" evidence="1">
    <location>
        <position position="112"/>
    </location>
    <ligand>
        <name>tRNA</name>
        <dbReference type="ChEBI" id="CHEBI:17843"/>
    </ligand>
</feature>
<feature type="site" description="Discriminates between blocked and unblocked aminoacyl-tRNA" evidence="1">
    <location>
        <position position="9"/>
    </location>
</feature>
<feature type="site" description="Stabilizes the basic form of H active site to accept a proton" evidence="1">
    <location>
        <position position="91"/>
    </location>
</feature>
<proteinExistence type="inferred from homology"/>
<name>PTH_CHLPM</name>
<dbReference type="EC" id="3.1.1.29" evidence="1"/>
<dbReference type="EMBL" id="CP000607">
    <property type="protein sequence ID" value="ABP36772.1"/>
    <property type="molecule type" value="Genomic_DNA"/>
</dbReference>
<dbReference type="SMR" id="A4SE63"/>
<dbReference type="STRING" id="290318.Cvib_0757"/>
<dbReference type="KEGG" id="pvi:Cvib_0757"/>
<dbReference type="eggNOG" id="COG0193">
    <property type="taxonomic scope" value="Bacteria"/>
</dbReference>
<dbReference type="HOGENOM" id="CLU_062456_4_1_10"/>
<dbReference type="OrthoDB" id="9800507at2"/>
<dbReference type="GO" id="GO:0005737">
    <property type="term" value="C:cytoplasm"/>
    <property type="evidence" value="ECO:0007669"/>
    <property type="project" value="UniProtKB-SubCell"/>
</dbReference>
<dbReference type="GO" id="GO:0004045">
    <property type="term" value="F:peptidyl-tRNA hydrolase activity"/>
    <property type="evidence" value="ECO:0007669"/>
    <property type="project" value="UniProtKB-UniRule"/>
</dbReference>
<dbReference type="GO" id="GO:0000049">
    <property type="term" value="F:tRNA binding"/>
    <property type="evidence" value="ECO:0007669"/>
    <property type="project" value="UniProtKB-UniRule"/>
</dbReference>
<dbReference type="GO" id="GO:0006515">
    <property type="term" value="P:protein quality control for misfolded or incompletely synthesized proteins"/>
    <property type="evidence" value="ECO:0007669"/>
    <property type="project" value="UniProtKB-UniRule"/>
</dbReference>
<dbReference type="GO" id="GO:0072344">
    <property type="term" value="P:rescue of stalled ribosome"/>
    <property type="evidence" value="ECO:0007669"/>
    <property type="project" value="UniProtKB-UniRule"/>
</dbReference>
<dbReference type="CDD" id="cd00462">
    <property type="entry name" value="PTH"/>
    <property type="match status" value="1"/>
</dbReference>
<dbReference type="FunFam" id="3.40.50.1470:FF:000001">
    <property type="entry name" value="Peptidyl-tRNA hydrolase"/>
    <property type="match status" value="1"/>
</dbReference>
<dbReference type="Gene3D" id="3.40.50.1470">
    <property type="entry name" value="Peptidyl-tRNA hydrolase"/>
    <property type="match status" value="1"/>
</dbReference>
<dbReference type="HAMAP" id="MF_00083">
    <property type="entry name" value="Pept_tRNA_hydro_bact"/>
    <property type="match status" value="1"/>
</dbReference>
<dbReference type="InterPro" id="IPR001328">
    <property type="entry name" value="Pept_tRNA_hydro"/>
</dbReference>
<dbReference type="InterPro" id="IPR018171">
    <property type="entry name" value="Pept_tRNA_hydro_CS"/>
</dbReference>
<dbReference type="InterPro" id="IPR036416">
    <property type="entry name" value="Pept_tRNA_hydro_sf"/>
</dbReference>
<dbReference type="NCBIfam" id="TIGR00447">
    <property type="entry name" value="pth"/>
    <property type="match status" value="1"/>
</dbReference>
<dbReference type="PANTHER" id="PTHR17224">
    <property type="entry name" value="PEPTIDYL-TRNA HYDROLASE"/>
    <property type="match status" value="1"/>
</dbReference>
<dbReference type="PANTHER" id="PTHR17224:SF1">
    <property type="entry name" value="PEPTIDYL-TRNA HYDROLASE"/>
    <property type="match status" value="1"/>
</dbReference>
<dbReference type="Pfam" id="PF01195">
    <property type="entry name" value="Pept_tRNA_hydro"/>
    <property type="match status" value="1"/>
</dbReference>
<dbReference type="SUPFAM" id="SSF53178">
    <property type="entry name" value="Peptidyl-tRNA hydrolase-like"/>
    <property type="match status" value="1"/>
</dbReference>
<dbReference type="PROSITE" id="PS01195">
    <property type="entry name" value="PEPT_TRNA_HYDROL_1"/>
    <property type="match status" value="1"/>
</dbReference>
<keyword id="KW-0963">Cytoplasm</keyword>
<keyword id="KW-0378">Hydrolase</keyword>
<keyword id="KW-0694">RNA-binding</keyword>
<keyword id="KW-0820">tRNA-binding</keyword>